<name>HEG1_MOUSE</name>
<accession>E9Q7X6</accession>
<accession>Q3TR26</accession>
<accession>Q6GQS6</accession>
<accession>Q8CED0</accession>
<comment type="function">
    <text evidence="4">Receptor component of the CCM signaling pathway which is a crucial regulator of heart and vessel formation and integrity. May be acting by stabilizing endothelial cell junctions.</text>
</comment>
<comment type="subunit">
    <text evidence="4">Interacts with CCM2 and KRIT1; KRIT1 markedly facilitates interaction with CCM2.</text>
</comment>
<comment type="subcellular location">
    <subcellularLocation>
        <location evidence="6">Cell membrane</location>
        <topology evidence="6">Single-pass type I membrane protein</topology>
    </subcellularLocation>
    <subcellularLocation>
        <location evidence="4">Cell junction</location>
    </subcellularLocation>
</comment>
<comment type="alternative products">
    <event type="alternative splicing"/>
    <isoform>
        <id>E9Q7X6-1</id>
        <name>1</name>
        <sequence type="displayed"/>
    </isoform>
    <isoform>
        <id>E9Q7X6-2</id>
        <name>2</name>
        <sequence type="described" ref="VSP_042234"/>
    </isoform>
    <isoform>
        <id>E9Q7X6-3</id>
        <name>3</name>
        <sequence type="described" ref="VSP_042234 VSP_042235 VSP_042236"/>
    </isoform>
</comment>
<comment type="developmental stage">
    <text evidence="4">Expressed in the endothelium of the developing heart and aorta and in the neural tube at 10.5 dpc, and in the arterial endothelium, smooth muscle, endocardium of the heart and brain vasculature at 14.5 dpc.</text>
</comment>
<comment type="disruption phenotype">
    <text evidence="4">Some mutant animals die in utero, but most die postnatally, about half before weaning as a result of pulmonary hemorrhage. Midgestation mutant embryos show cardiac defects characterized by invagination of the ventricular cavity into, and often through, the compact layer of ventricular myocardium. The septal myocardium is similarly honeycombed by endothelial-lined extensions from the ventricular cavity, a defect accompanied by the presence of ventricular septal defects in most late-gestation embryos. Neonatal mice also show defective cardiac integrity manifested by a blood-filled pericardial sac, due to the rupture of the low-pressure atrial chamber of the heart. Cardiac or pulmonary integrity defects are observed in half of the animals. About 10% of neonatal mutant mice exhibit dilated lymphatic vessel malformations.</text>
</comment>
<comment type="miscellaneous">
    <molecule>Isoform 3</molecule>
    <text evidence="6">May be due to an intron retention.</text>
</comment>
<comment type="sequence caution" evidence="6">
    <conflict type="erroneous initiation">
        <sequence resource="EMBL-CDS" id="AAH72651"/>
    </conflict>
    <text>Truncated N-terminus.</text>
</comment>
<evidence type="ECO:0000255" key="1"/>
<evidence type="ECO:0000255" key="2">
    <source>
        <dbReference type="PROSITE-ProRule" id="PRU00076"/>
    </source>
</evidence>
<evidence type="ECO:0000256" key="3">
    <source>
        <dbReference type="SAM" id="MobiDB-lite"/>
    </source>
</evidence>
<evidence type="ECO:0000269" key="4">
    <source>
    </source>
</evidence>
<evidence type="ECO:0000303" key="5">
    <source>
    </source>
</evidence>
<evidence type="ECO:0000305" key="6"/>
<evidence type="ECO:0007744" key="7">
    <source>
    </source>
</evidence>
<sequence>MATPRAPRWPPPSLLLLLLLPLLLLPPAAPGARGSLPSPAHRTLLPVAGPLSPPGAGHTAPGPGVATRRGRSGRVPRGVSAAAARNRWLESNNPEPHIGCSPSYQSQEDHSGSRKGVTAQNARMSHSSSEGPENPPLLPETSAEWSNMASSHRADIAGLRRGPSPEITTAPTAHSSLLSLESLPESPSSSRSQRRITPSQTESGTSLGFLERTRELPEEGTVHTQVAGTWVSRQASHPALEPGEPTVLSQKRNSSGQEHSGPPFSWSQSHPPPSDHPSSSGSIKNGNNFTALQNPSVTQTKSMLITDTYTNGVPRTLRSLPVGVDPADETEGFPEHSRLGITSMSVRSSPSVKDSRTNSGLTEHLGDGEGTELSTENGYGLPSIHWQSDAPSFGGRQLASSSEAGDGRAMPLTEAVFRSDPSIGGGESTGRWILTKKKTSTDAAESSALHPEAGGAGGLTQSSHAAQQPRGGGEDSGMGGRSYAESSSSSSSTSSSESLDSSAPLREHSLTGLSYTREHGSDAGQRTSSDHTDHGYVPSTFTKGERTLLSITDNTSYSEASESSTSSVKISDSPSQAQPKQSSMSSDDDEPAQSSTESPVLHTSNLPTYTSTVNMPNTLVLDTGTKPVEDPSDSRVPSTQPSPSQPQPFSSALPSTRSPGSTSETTTSSPSPSPISLLVSTLAPYSVSQTTFPHPSSTLVPHRPREPRVTSVQMSTAISAIALIPSNQTANPKNQSTPQQEKPITEAKSPSLVSPPTDSTKAVTVSLPPGAPWSPALTGFSTGPALPATSTSLAQMSPALTSAMPQTTHSPVTSPSTLSHVEALTSGAVVVHTTPKKPHLPTNPEILVPHISTEGAITTEGNREHTDPTTQPIPLTTSTTSAGERTTELGRAEESSPSHFLTPSSPQTTDVSTAEMLTSRYITFAAQSTSQSPTALPPLTPVNSCTVNPCLHDGKCIVDLTGRGYRCVCPPAWQGENCSVDVNECLSSPCPPLATCNNTQGSFTCRCPVGYQLEKGICNLVRTFVTEFKLKKTFLNTTAENHSNTQELENEIAQTLNVCFSTLPGYIRTTAHVSREPSTVFISLKTTFALASNVTLFDLADRIQKYVNSCRSSAEVCQLLGSQRRVFRAGSLCKRKSPECDKETSICTDLDGVALCQCKSGYFQFNKMDHSCRACEDGYRLENETCMSCPFGLGGLNCGNPYQLITVVIAAAGGGLLLILGVALIVTCCRKSKNDISKLIFKSGDFQMSPYTDVPKNPRSQEWGREAIEMHENGSTKNLLQMTDVYYSPTNVRNPELERNGLYPAYTGLPGSRHSCIFPGQYNPSFISDESRRRDYF</sequence>
<organism>
    <name type="scientific">Mus musculus</name>
    <name type="common">Mouse</name>
    <dbReference type="NCBI Taxonomy" id="10090"/>
    <lineage>
        <taxon>Eukaryota</taxon>
        <taxon>Metazoa</taxon>
        <taxon>Chordata</taxon>
        <taxon>Craniata</taxon>
        <taxon>Vertebrata</taxon>
        <taxon>Euteleostomi</taxon>
        <taxon>Mammalia</taxon>
        <taxon>Eutheria</taxon>
        <taxon>Euarchontoglires</taxon>
        <taxon>Glires</taxon>
        <taxon>Rodentia</taxon>
        <taxon>Myomorpha</taxon>
        <taxon>Muroidea</taxon>
        <taxon>Muridae</taxon>
        <taxon>Murinae</taxon>
        <taxon>Mus</taxon>
        <taxon>Mus</taxon>
    </lineage>
</organism>
<feature type="signal peptide" evidence="1">
    <location>
        <begin position="1"/>
        <end position="31"/>
    </location>
</feature>
<feature type="chain" id="PRO_0000415377" description="Protein HEG homolog 1">
    <location>
        <begin position="32"/>
        <end position="1337"/>
    </location>
</feature>
<feature type="topological domain" description="Extracellular" evidence="1">
    <location>
        <begin position="32"/>
        <end position="1204"/>
    </location>
</feature>
<feature type="transmembrane region" description="Helical" evidence="1">
    <location>
        <begin position="1205"/>
        <end position="1225"/>
    </location>
</feature>
<feature type="topological domain" description="Cytoplasmic" evidence="1">
    <location>
        <begin position="1226"/>
        <end position="1337"/>
    </location>
</feature>
<feature type="domain" description="EGF-like 1" evidence="2">
    <location>
        <begin position="941"/>
        <end position="979"/>
    </location>
</feature>
<feature type="domain" description="EGF-like 2; calcium-binding" evidence="2">
    <location>
        <begin position="981"/>
        <end position="1019"/>
    </location>
</feature>
<feature type="region of interest" description="Disordered" evidence="3">
    <location>
        <begin position="28"/>
        <end position="149"/>
    </location>
</feature>
<feature type="region of interest" description="Disordered" evidence="3">
    <location>
        <begin position="175"/>
        <end position="211"/>
    </location>
</feature>
<feature type="region of interest" description="Disordered" evidence="3">
    <location>
        <begin position="235"/>
        <end position="296"/>
    </location>
</feature>
<feature type="region of interest" description="Disordered" evidence="3">
    <location>
        <begin position="313"/>
        <end position="675"/>
    </location>
</feature>
<feature type="region of interest" description="Disordered" evidence="3">
    <location>
        <begin position="723"/>
        <end position="767"/>
    </location>
</feature>
<feature type="region of interest" description="Disordered" evidence="3">
    <location>
        <begin position="860"/>
        <end position="909"/>
    </location>
</feature>
<feature type="compositionally biased region" description="Low complexity" evidence="3">
    <location>
        <begin position="28"/>
        <end position="40"/>
    </location>
</feature>
<feature type="compositionally biased region" description="Low complexity" evidence="3">
    <location>
        <begin position="54"/>
        <end position="66"/>
    </location>
</feature>
<feature type="compositionally biased region" description="Polar residues" evidence="3">
    <location>
        <begin position="118"/>
        <end position="131"/>
    </location>
</feature>
<feature type="compositionally biased region" description="Low complexity" evidence="3">
    <location>
        <begin position="175"/>
        <end position="190"/>
    </location>
</feature>
<feature type="compositionally biased region" description="Polar residues" evidence="3">
    <location>
        <begin position="195"/>
        <end position="206"/>
    </location>
</feature>
<feature type="compositionally biased region" description="Polar residues" evidence="3">
    <location>
        <begin position="247"/>
        <end position="258"/>
    </location>
</feature>
<feature type="compositionally biased region" description="Polar residues" evidence="3">
    <location>
        <begin position="283"/>
        <end position="296"/>
    </location>
</feature>
<feature type="compositionally biased region" description="Polar residues" evidence="3">
    <location>
        <begin position="340"/>
        <end position="361"/>
    </location>
</feature>
<feature type="compositionally biased region" description="Gly residues" evidence="3">
    <location>
        <begin position="470"/>
        <end position="480"/>
    </location>
</feature>
<feature type="compositionally biased region" description="Low complexity" evidence="3">
    <location>
        <begin position="486"/>
        <end position="502"/>
    </location>
</feature>
<feature type="compositionally biased region" description="Low complexity" evidence="3">
    <location>
        <begin position="556"/>
        <end position="575"/>
    </location>
</feature>
<feature type="compositionally biased region" description="Polar residues" evidence="3">
    <location>
        <begin position="576"/>
        <end position="585"/>
    </location>
</feature>
<feature type="compositionally biased region" description="Polar residues" evidence="3">
    <location>
        <begin position="592"/>
        <end position="617"/>
    </location>
</feature>
<feature type="compositionally biased region" description="Low complexity" evidence="3">
    <location>
        <begin position="637"/>
        <end position="675"/>
    </location>
</feature>
<feature type="compositionally biased region" description="Polar residues" evidence="3">
    <location>
        <begin position="725"/>
        <end position="742"/>
    </location>
</feature>
<feature type="compositionally biased region" description="Polar residues" evidence="3">
    <location>
        <begin position="751"/>
        <end position="763"/>
    </location>
</feature>
<feature type="compositionally biased region" description="Low complexity" evidence="3">
    <location>
        <begin position="868"/>
        <end position="884"/>
    </location>
</feature>
<feature type="compositionally biased region" description="Basic and acidic residues" evidence="3">
    <location>
        <begin position="885"/>
        <end position="896"/>
    </location>
</feature>
<feature type="compositionally biased region" description="Polar residues" evidence="3">
    <location>
        <begin position="897"/>
        <end position="909"/>
    </location>
</feature>
<feature type="modified residue" description="Phosphoserine" evidence="7">
    <location>
        <position position="1315"/>
    </location>
</feature>
<feature type="glycosylation site" description="N-linked (GlcNAc...) asparagine" evidence="1">
    <location>
        <position position="1093"/>
    </location>
</feature>
<feature type="disulfide bond" evidence="2">
    <location>
        <begin position="945"/>
        <end position="956"/>
    </location>
</feature>
<feature type="disulfide bond" evidence="2">
    <location>
        <begin position="950"/>
        <end position="967"/>
    </location>
</feature>
<feature type="disulfide bond" evidence="2">
    <location>
        <begin position="969"/>
        <end position="978"/>
    </location>
</feature>
<feature type="disulfide bond" evidence="2">
    <location>
        <begin position="985"/>
        <end position="996"/>
    </location>
</feature>
<feature type="disulfide bond" evidence="2">
    <location>
        <begin position="990"/>
        <end position="1005"/>
    </location>
</feature>
<feature type="disulfide bond" evidence="2">
    <location>
        <begin position="1007"/>
        <end position="1018"/>
    </location>
</feature>
<feature type="splice variant" id="VSP_042234" description="In isoform 2 and isoform 3." evidence="5">
    <location>
        <begin position="83"/>
        <end position="179"/>
    </location>
</feature>
<feature type="splice variant" id="VSP_042235" description="In isoform 3." evidence="5">
    <original>LTGLSYTREHGSDAGQRTSSDHTDHGYVPSTFTKGERTLLS</original>
    <variation>REFLVHGNRHRVLGCVWSFDLPKHTLGKEFHYSQAIILLAD</variation>
    <location>
        <begin position="510"/>
        <end position="550"/>
    </location>
</feature>
<feature type="splice variant" id="VSP_042236" description="In isoform 3." evidence="5">
    <location>
        <begin position="551"/>
        <end position="1337"/>
    </location>
</feature>
<protein>
    <recommendedName>
        <fullName>Protein HEG homolog 1</fullName>
    </recommendedName>
</protein>
<dbReference type="EMBL" id="AK163128">
    <property type="protein sequence ID" value="BAE37205.1"/>
    <property type="molecule type" value="mRNA"/>
</dbReference>
<dbReference type="EMBL" id="AK028518">
    <property type="protein sequence ID" value="BAC25987.1"/>
    <property type="molecule type" value="mRNA"/>
</dbReference>
<dbReference type="EMBL" id="AC121570">
    <property type="status" value="NOT_ANNOTATED_CDS"/>
    <property type="molecule type" value="Genomic_DNA"/>
</dbReference>
<dbReference type="EMBL" id="CH466521">
    <property type="protein sequence ID" value="EDK97850.1"/>
    <property type="molecule type" value="Genomic_DNA"/>
</dbReference>
<dbReference type="EMBL" id="BC072651">
    <property type="protein sequence ID" value="AAH72651.1"/>
    <property type="status" value="ALT_INIT"/>
    <property type="molecule type" value="mRNA"/>
</dbReference>
<dbReference type="SMR" id="E9Q7X6"/>
<dbReference type="CORUM" id="E9Q7X6"/>
<dbReference type="FunCoup" id="E9Q7X6">
    <property type="interactions" value="129"/>
</dbReference>
<dbReference type="STRING" id="10090.ENSMUSP00000119790"/>
<dbReference type="GlyCosmos" id="E9Q7X6">
    <property type="glycosylation" value="1 site, No reported glycans"/>
</dbReference>
<dbReference type="GlyGen" id="E9Q7X6">
    <property type="glycosylation" value="7 sites, 5 N-linked glycans (6 sites)"/>
</dbReference>
<dbReference type="iPTMnet" id="E9Q7X6"/>
<dbReference type="PhosphoSitePlus" id="E9Q7X6"/>
<dbReference type="SwissPalm" id="E9Q7X6"/>
<dbReference type="jPOST" id="E9Q7X6"/>
<dbReference type="PaxDb" id="10090-ENSMUSP00000119790"/>
<dbReference type="ProteomicsDB" id="269558">
    <molecule id="E9Q7X6-1"/>
</dbReference>
<dbReference type="ProteomicsDB" id="269559">
    <molecule id="E9Q7X6-2"/>
</dbReference>
<dbReference type="ProteomicsDB" id="269560">
    <molecule id="E9Q7X6-3"/>
</dbReference>
<dbReference type="Pumba" id="E9Q7X6"/>
<dbReference type="Antibodypedia" id="2617">
    <property type="antibodies" value="16 antibodies from 9 providers"/>
</dbReference>
<dbReference type="Ensembl" id="ENSMUST00000126532.2">
    <molecule id="E9Q7X6-1"/>
    <property type="protein sequence ID" value="ENSMUSP00000119790.2"/>
    <property type="gene ID" value="ENSMUSG00000075254.13"/>
</dbReference>
<dbReference type="UCSC" id="uc007zah.1">
    <molecule id="E9Q7X6-3"/>
    <property type="organism name" value="mouse"/>
</dbReference>
<dbReference type="AGR" id="MGI:1924696"/>
<dbReference type="MGI" id="MGI:1924696">
    <property type="gene designation" value="Heg1"/>
</dbReference>
<dbReference type="VEuPathDB" id="HostDB:ENSMUSG00000075254"/>
<dbReference type="eggNOG" id="ENOG502QPW9">
    <property type="taxonomic scope" value="Eukaryota"/>
</dbReference>
<dbReference type="GeneTree" id="ENSGT00710000106813"/>
<dbReference type="InParanoid" id="E9Q7X6"/>
<dbReference type="OMA" id="MGTERAM"/>
<dbReference type="OrthoDB" id="9946171at2759"/>
<dbReference type="PhylomeDB" id="E9Q7X6"/>
<dbReference type="ChiTaRS" id="Heg1">
    <property type="organism name" value="mouse"/>
</dbReference>
<dbReference type="PRO" id="PR:E9Q7X6"/>
<dbReference type="Proteomes" id="UP000000589">
    <property type="component" value="Chromosome 16"/>
</dbReference>
<dbReference type="RNAct" id="E9Q7X6">
    <property type="molecule type" value="protein"/>
</dbReference>
<dbReference type="Bgee" id="ENSMUSG00000075254">
    <property type="expression patterns" value="Expressed in embryonic post-anal tail and 148 other cell types or tissues"/>
</dbReference>
<dbReference type="ExpressionAtlas" id="E9Q7X6">
    <property type="expression patterns" value="baseline and differential"/>
</dbReference>
<dbReference type="GO" id="GO:0009986">
    <property type="term" value="C:cell surface"/>
    <property type="evidence" value="ECO:0000314"/>
    <property type="project" value="MGI"/>
</dbReference>
<dbReference type="GO" id="GO:0005911">
    <property type="term" value="C:cell-cell junction"/>
    <property type="evidence" value="ECO:0000314"/>
    <property type="project" value="MGI"/>
</dbReference>
<dbReference type="GO" id="GO:0009897">
    <property type="term" value="C:external side of plasma membrane"/>
    <property type="evidence" value="ECO:0000314"/>
    <property type="project" value="MGI"/>
</dbReference>
<dbReference type="GO" id="GO:0005509">
    <property type="term" value="F:calcium ion binding"/>
    <property type="evidence" value="ECO:0007669"/>
    <property type="project" value="InterPro"/>
</dbReference>
<dbReference type="GO" id="GO:0003209">
    <property type="term" value="P:cardiac atrium morphogenesis"/>
    <property type="evidence" value="ECO:0000315"/>
    <property type="project" value="MGI"/>
</dbReference>
<dbReference type="GO" id="GO:0055017">
    <property type="term" value="P:cardiac muscle tissue growth"/>
    <property type="evidence" value="ECO:0000316"/>
    <property type="project" value="MGI"/>
</dbReference>
<dbReference type="GO" id="GO:0045216">
    <property type="term" value="P:cell-cell junction organization"/>
    <property type="evidence" value="ECO:0000315"/>
    <property type="project" value="MGI"/>
</dbReference>
<dbReference type="GO" id="GO:0001885">
    <property type="term" value="P:endothelial cell development"/>
    <property type="evidence" value="ECO:0000316"/>
    <property type="project" value="MGI"/>
</dbReference>
<dbReference type="GO" id="GO:0001886">
    <property type="term" value="P:endothelial cell morphogenesis"/>
    <property type="evidence" value="ECO:0000315"/>
    <property type="project" value="MGI"/>
</dbReference>
<dbReference type="GO" id="GO:0007507">
    <property type="term" value="P:heart development"/>
    <property type="evidence" value="ECO:0000315"/>
    <property type="project" value="MGI"/>
</dbReference>
<dbReference type="GO" id="GO:0001701">
    <property type="term" value="P:in utero embryonic development"/>
    <property type="evidence" value="ECO:0000315"/>
    <property type="project" value="MGI"/>
</dbReference>
<dbReference type="GO" id="GO:0030324">
    <property type="term" value="P:lung development"/>
    <property type="evidence" value="ECO:0000315"/>
    <property type="project" value="MGI"/>
</dbReference>
<dbReference type="GO" id="GO:0003017">
    <property type="term" value="P:lymph circulation"/>
    <property type="evidence" value="ECO:0000315"/>
    <property type="project" value="MGI"/>
</dbReference>
<dbReference type="GO" id="GO:0001945">
    <property type="term" value="P:lymph vessel development"/>
    <property type="evidence" value="ECO:0000315"/>
    <property type="project" value="MGI"/>
</dbReference>
<dbReference type="GO" id="GO:0035264">
    <property type="term" value="P:multicellular organism growth"/>
    <property type="evidence" value="ECO:0000316"/>
    <property type="project" value="MGI"/>
</dbReference>
<dbReference type="GO" id="GO:1905709">
    <property type="term" value="P:negative regulation of membrane permeability"/>
    <property type="evidence" value="ECO:0000250"/>
    <property type="project" value="UniProtKB"/>
</dbReference>
<dbReference type="GO" id="GO:0035024">
    <property type="term" value="P:negative regulation of Rho protein signal transduction"/>
    <property type="evidence" value="ECO:0000250"/>
    <property type="project" value="UniProtKB"/>
</dbReference>
<dbReference type="GO" id="GO:2000299">
    <property type="term" value="P:negative regulation of Rho-dependent protein serine/threonine kinase activity"/>
    <property type="evidence" value="ECO:0000250"/>
    <property type="project" value="UniProtKB"/>
</dbReference>
<dbReference type="GO" id="GO:0060039">
    <property type="term" value="P:pericardium development"/>
    <property type="evidence" value="ECO:0000315"/>
    <property type="project" value="MGI"/>
</dbReference>
<dbReference type="GO" id="GO:0090271">
    <property type="term" value="P:positive regulation of fibroblast growth factor production"/>
    <property type="evidence" value="ECO:0000316"/>
    <property type="project" value="MGI"/>
</dbReference>
<dbReference type="GO" id="GO:0009791">
    <property type="term" value="P:post-embryonic development"/>
    <property type="evidence" value="ECO:0000315"/>
    <property type="project" value="MGI"/>
</dbReference>
<dbReference type="GO" id="GO:1902414">
    <property type="term" value="P:protein localization to cell junction"/>
    <property type="evidence" value="ECO:0000250"/>
    <property type="project" value="UniProtKB"/>
</dbReference>
<dbReference type="GO" id="GO:0050878">
    <property type="term" value="P:regulation of body fluid levels"/>
    <property type="evidence" value="ECO:0000315"/>
    <property type="project" value="MGI"/>
</dbReference>
<dbReference type="GO" id="GO:0001944">
    <property type="term" value="P:vasculature development"/>
    <property type="evidence" value="ECO:0000316"/>
    <property type="project" value="MGI"/>
</dbReference>
<dbReference type="GO" id="GO:0001570">
    <property type="term" value="P:vasculogenesis"/>
    <property type="evidence" value="ECO:0000316"/>
    <property type="project" value="MGI"/>
</dbReference>
<dbReference type="GO" id="GO:0048845">
    <property type="term" value="P:venous blood vessel morphogenesis"/>
    <property type="evidence" value="ECO:0000316"/>
    <property type="project" value="MGI"/>
</dbReference>
<dbReference type="GO" id="GO:0003281">
    <property type="term" value="P:ventricular septum development"/>
    <property type="evidence" value="ECO:0000315"/>
    <property type="project" value="MGI"/>
</dbReference>
<dbReference type="GO" id="GO:0003222">
    <property type="term" value="P:ventricular trabecula myocardium morphogenesis"/>
    <property type="evidence" value="ECO:0000316"/>
    <property type="project" value="MGI"/>
</dbReference>
<dbReference type="CDD" id="cd00054">
    <property type="entry name" value="EGF_CA"/>
    <property type="match status" value="2"/>
</dbReference>
<dbReference type="FunFam" id="2.10.25.10:FF:000673">
    <property type="entry name" value="Heart development protein with EGF like domains 1"/>
    <property type="match status" value="1"/>
</dbReference>
<dbReference type="FunFam" id="2.10.25.10:FF:000358">
    <property type="entry name" value="protein HEG homolog 1 isoform X1"/>
    <property type="match status" value="1"/>
</dbReference>
<dbReference type="Gene3D" id="2.10.25.10">
    <property type="entry name" value="Laminin"/>
    <property type="match status" value="2"/>
</dbReference>
<dbReference type="InterPro" id="IPR001881">
    <property type="entry name" value="EGF-like_Ca-bd_dom"/>
</dbReference>
<dbReference type="InterPro" id="IPR000742">
    <property type="entry name" value="EGF-like_dom"/>
</dbReference>
<dbReference type="InterPro" id="IPR000152">
    <property type="entry name" value="EGF-type_Asp/Asn_hydroxyl_site"/>
</dbReference>
<dbReference type="InterPro" id="IPR018097">
    <property type="entry name" value="EGF_Ca-bd_CS"/>
</dbReference>
<dbReference type="InterPro" id="IPR049883">
    <property type="entry name" value="NOTCH1_EGF-like"/>
</dbReference>
<dbReference type="PANTHER" id="PTHR24037">
    <property type="entry name" value="HEART DEVELOPMENT PROTEIN WITH EGF-LIKE DOMAINS 1"/>
    <property type="match status" value="1"/>
</dbReference>
<dbReference type="PANTHER" id="PTHR24037:SF3">
    <property type="entry name" value="PROTEIN HEG HOMOLOG 1"/>
    <property type="match status" value="1"/>
</dbReference>
<dbReference type="Pfam" id="PF00008">
    <property type="entry name" value="EGF"/>
    <property type="match status" value="1"/>
</dbReference>
<dbReference type="Pfam" id="PF07645">
    <property type="entry name" value="EGF_CA"/>
    <property type="match status" value="1"/>
</dbReference>
<dbReference type="SMART" id="SM00181">
    <property type="entry name" value="EGF"/>
    <property type="match status" value="3"/>
</dbReference>
<dbReference type="SMART" id="SM00179">
    <property type="entry name" value="EGF_CA"/>
    <property type="match status" value="2"/>
</dbReference>
<dbReference type="SUPFAM" id="SSF57196">
    <property type="entry name" value="EGF/Laminin"/>
    <property type="match status" value="2"/>
</dbReference>
<dbReference type="PROSITE" id="PS00010">
    <property type="entry name" value="ASX_HYDROXYL"/>
    <property type="match status" value="1"/>
</dbReference>
<dbReference type="PROSITE" id="PS00022">
    <property type="entry name" value="EGF_1"/>
    <property type="match status" value="1"/>
</dbReference>
<dbReference type="PROSITE" id="PS01186">
    <property type="entry name" value="EGF_2"/>
    <property type="match status" value="1"/>
</dbReference>
<dbReference type="PROSITE" id="PS50026">
    <property type="entry name" value="EGF_3"/>
    <property type="match status" value="2"/>
</dbReference>
<dbReference type="PROSITE" id="PS01187">
    <property type="entry name" value="EGF_CA"/>
    <property type="match status" value="1"/>
</dbReference>
<reference key="1">
    <citation type="journal article" date="2005" name="Science">
        <title>The transcriptional landscape of the mammalian genome.</title>
        <authorList>
            <person name="Carninci P."/>
            <person name="Kasukawa T."/>
            <person name="Katayama S."/>
            <person name="Gough J."/>
            <person name="Frith M.C."/>
            <person name="Maeda N."/>
            <person name="Oyama R."/>
            <person name="Ravasi T."/>
            <person name="Lenhard B."/>
            <person name="Wells C."/>
            <person name="Kodzius R."/>
            <person name="Shimokawa K."/>
            <person name="Bajic V.B."/>
            <person name="Brenner S.E."/>
            <person name="Batalov S."/>
            <person name="Forrest A.R."/>
            <person name="Zavolan M."/>
            <person name="Davis M.J."/>
            <person name="Wilming L.G."/>
            <person name="Aidinis V."/>
            <person name="Allen J.E."/>
            <person name="Ambesi-Impiombato A."/>
            <person name="Apweiler R."/>
            <person name="Aturaliya R.N."/>
            <person name="Bailey T.L."/>
            <person name="Bansal M."/>
            <person name="Baxter L."/>
            <person name="Beisel K.W."/>
            <person name="Bersano T."/>
            <person name="Bono H."/>
            <person name="Chalk A.M."/>
            <person name="Chiu K.P."/>
            <person name="Choudhary V."/>
            <person name="Christoffels A."/>
            <person name="Clutterbuck D.R."/>
            <person name="Crowe M.L."/>
            <person name="Dalla E."/>
            <person name="Dalrymple B.P."/>
            <person name="de Bono B."/>
            <person name="Della Gatta G."/>
            <person name="di Bernardo D."/>
            <person name="Down T."/>
            <person name="Engstrom P."/>
            <person name="Fagiolini M."/>
            <person name="Faulkner G."/>
            <person name="Fletcher C.F."/>
            <person name="Fukushima T."/>
            <person name="Furuno M."/>
            <person name="Futaki S."/>
            <person name="Gariboldi M."/>
            <person name="Georgii-Hemming P."/>
            <person name="Gingeras T.R."/>
            <person name="Gojobori T."/>
            <person name="Green R.E."/>
            <person name="Gustincich S."/>
            <person name="Harbers M."/>
            <person name="Hayashi Y."/>
            <person name="Hensch T.K."/>
            <person name="Hirokawa N."/>
            <person name="Hill D."/>
            <person name="Huminiecki L."/>
            <person name="Iacono M."/>
            <person name="Ikeo K."/>
            <person name="Iwama A."/>
            <person name="Ishikawa T."/>
            <person name="Jakt M."/>
            <person name="Kanapin A."/>
            <person name="Katoh M."/>
            <person name="Kawasawa Y."/>
            <person name="Kelso J."/>
            <person name="Kitamura H."/>
            <person name="Kitano H."/>
            <person name="Kollias G."/>
            <person name="Krishnan S.P."/>
            <person name="Kruger A."/>
            <person name="Kummerfeld S.K."/>
            <person name="Kurochkin I.V."/>
            <person name="Lareau L.F."/>
            <person name="Lazarevic D."/>
            <person name="Lipovich L."/>
            <person name="Liu J."/>
            <person name="Liuni S."/>
            <person name="McWilliam S."/>
            <person name="Madan Babu M."/>
            <person name="Madera M."/>
            <person name="Marchionni L."/>
            <person name="Matsuda H."/>
            <person name="Matsuzawa S."/>
            <person name="Miki H."/>
            <person name="Mignone F."/>
            <person name="Miyake S."/>
            <person name="Morris K."/>
            <person name="Mottagui-Tabar S."/>
            <person name="Mulder N."/>
            <person name="Nakano N."/>
            <person name="Nakauchi H."/>
            <person name="Ng P."/>
            <person name="Nilsson R."/>
            <person name="Nishiguchi S."/>
            <person name="Nishikawa S."/>
            <person name="Nori F."/>
            <person name="Ohara O."/>
            <person name="Okazaki Y."/>
            <person name="Orlando V."/>
            <person name="Pang K.C."/>
            <person name="Pavan W.J."/>
            <person name="Pavesi G."/>
            <person name="Pesole G."/>
            <person name="Petrovsky N."/>
            <person name="Piazza S."/>
            <person name="Reed J."/>
            <person name="Reid J.F."/>
            <person name="Ring B.Z."/>
            <person name="Ringwald M."/>
            <person name="Rost B."/>
            <person name="Ruan Y."/>
            <person name="Salzberg S.L."/>
            <person name="Sandelin A."/>
            <person name="Schneider C."/>
            <person name="Schoenbach C."/>
            <person name="Sekiguchi K."/>
            <person name="Semple C.A."/>
            <person name="Seno S."/>
            <person name="Sessa L."/>
            <person name="Sheng Y."/>
            <person name="Shibata Y."/>
            <person name="Shimada H."/>
            <person name="Shimada K."/>
            <person name="Silva D."/>
            <person name="Sinclair B."/>
            <person name="Sperling S."/>
            <person name="Stupka E."/>
            <person name="Sugiura K."/>
            <person name="Sultana R."/>
            <person name="Takenaka Y."/>
            <person name="Taki K."/>
            <person name="Tammoja K."/>
            <person name="Tan S.L."/>
            <person name="Tang S."/>
            <person name="Taylor M.S."/>
            <person name="Tegner J."/>
            <person name="Teichmann S.A."/>
            <person name="Ueda H.R."/>
            <person name="van Nimwegen E."/>
            <person name="Verardo R."/>
            <person name="Wei C.L."/>
            <person name="Yagi K."/>
            <person name="Yamanishi H."/>
            <person name="Zabarovsky E."/>
            <person name="Zhu S."/>
            <person name="Zimmer A."/>
            <person name="Hide W."/>
            <person name="Bult C."/>
            <person name="Grimmond S.M."/>
            <person name="Teasdale R.D."/>
            <person name="Liu E.T."/>
            <person name="Brusic V."/>
            <person name="Quackenbush J."/>
            <person name="Wahlestedt C."/>
            <person name="Mattick J.S."/>
            <person name="Hume D.A."/>
            <person name="Kai C."/>
            <person name="Sasaki D."/>
            <person name="Tomaru Y."/>
            <person name="Fukuda S."/>
            <person name="Kanamori-Katayama M."/>
            <person name="Suzuki M."/>
            <person name="Aoki J."/>
            <person name="Arakawa T."/>
            <person name="Iida J."/>
            <person name="Imamura K."/>
            <person name="Itoh M."/>
            <person name="Kato T."/>
            <person name="Kawaji H."/>
            <person name="Kawagashira N."/>
            <person name="Kawashima T."/>
            <person name="Kojima M."/>
            <person name="Kondo S."/>
            <person name="Konno H."/>
            <person name="Nakano K."/>
            <person name="Ninomiya N."/>
            <person name="Nishio T."/>
            <person name="Okada M."/>
            <person name="Plessy C."/>
            <person name="Shibata K."/>
            <person name="Shiraki T."/>
            <person name="Suzuki S."/>
            <person name="Tagami M."/>
            <person name="Waki K."/>
            <person name="Watahiki A."/>
            <person name="Okamura-Oho Y."/>
            <person name="Suzuki H."/>
            <person name="Kawai J."/>
            <person name="Hayashizaki Y."/>
        </authorList>
    </citation>
    <scope>NUCLEOTIDE SEQUENCE [LARGE SCALE MRNA] (ISOFORM 3)</scope>
</reference>
<reference key="2">
    <citation type="journal article" date="2009" name="PLoS Biol.">
        <title>Lineage-specific biology revealed by a finished genome assembly of the mouse.</title>
        <authorList>
            <person name="Church D.M."/>
            <person name="Goodstadt L."/>
            <person name="Hillier L.W."/>
            <person name="Zody M.C."/>
            <person name="Goldstein S."/>
            <person name="She X."/>
            <person name="Bult C.J."/>
            <person name="Agarwala R."/>
            <person name="Cherry J.L."/>
            <person name="DiCuccio M."/>
            <person name="Hlavina W."/>
            <person name="Kapustin Y."/>
            <person name="Meric P."/>
            <person name="Maglott D."/>
            <person name="Birtle Z."/>
            <person name="Marques A.C."/>
            <person name="Graves T."/>
            <person name="Zhou S."/>
            <person name="Teague B."/>
            <person name="Potamousis K."/>
            <person name="Churas C."/>
            <person name="Place M."/>
            <person name="Herschleb J."/>
            <person name="Runnheim R."/>
            <person name="Forrest D."/>
            <person name="Amos-Landgraf J."/>
            <person name="Schwartz D.C."/>
            <person name="Cheng Z."/>
            <person name="Lindblad-Toh K."/>
            <person name="Eichler E.E."/>
            <person name="Ponting C.P."/>
        </authorList>
    </citation>
    <scope>NUCLEOTIDE SEQUENCE [LARGE SCALE GENOMIC DNA]</scope>
    <source>
        <strain>C57BL/6J</strain>
    </source>
</reference>
<reference key="3">
    <citation type="submission" date="2005-07" db="EMBL/GenBank/DDBJ databases">
        <authorList>
            <person name="Mural R.J."/>
            <person name="Adams M.D."/>
            <person name="Myers E.W."/>
            <person name="Smith H.O."/>
            <person name="Venter J.C."/>
        </authorList>
    </citation>
    <scope>NUCLEOTIDE SEQUENCE [LARGE SCALE GENOMIC DNA]</scope>
</reference>
<reference key="4">
    <citation type="journal article" date="2004" name="Genome Res.">
        <title>The status, quality, and expansion of the NIH full-length cDNA project: the Mammalian Gene Collection (MGC).</title>
        <authorList>
            <consortium name="The MGC Project Team"/>
        </authorList>
    </citation>
    <scope>NUCLEOTIDE SEQUENCE [LARGE SCALE MRNA] OF 1007-1240 (ISOFORM 1)</scope>
</reference>
<reference key="5">
    <citation type="journal article" date="2009" name="Nat. Med.">
        <title>Regulation of cardiovascular development and integrity by the heart of glass-cerebral cavernous malformation protein pathway.</title>
        <authorList>
            <person name="Kleaveland B."/>
            <person name="Zheng X."/>
            <person name="Liu J.J."/>
            <person name="Blum Y."/>
            <person name="Tung J.J."/>
            <person name="Zou Z."/>
            <person name="Sweeney S.M."/>
            <person name="Chen M."/>
            <person name="Guo L."/>
            <person name="Lu M.M."/>
            <person name="Zhou D."/>
            <person name="Kitajewski J."/>
            <person name="Affolter M."/>
            <person name="Ginsberg M.H."/>
            <person name="Kahn M.L."/>
        </authorList>
    </citation>
    <scope>IDENTIFICATION</scope>
    <scope>FUNCTION</scope>
    <scope>INTERACTION WITH CCM2 AND KRIT1</scope>
    <scope>SUBCELLULAR LOCATION</scope>
    <scope>DEVELOPMENTAL STAGE</scope>
    <scope>DISRUPTION PHENOTYPE</scope>
</reference>
<reference key="6">
    <citation type="journal article" date="2010" name="Cell">
        <title>A tissue-specific atlas of mouse protein phosphorylation and expression.</title>
        <authorList>
            <person name="Huttlin E.L."/>
            <person name="Jedrychowski M.P."/>
            <person name="Elias J.E."/>
            <person name="Goswami T."/>
            <person name="Rad R."/>
            <person name="Beausoleil S.A."/>
            <person name="Villen J."/>
            <person name="Haas W."/>
            <person name="Sowa M.E."/>
            <person name="Gygi S.P."/>
        </authorList>
    </citation>
    <scope>PHOSPHORYLATION [LARGE SCALE ANALYSIS] AT SER-1315</scope>
    <scope>IDENTIFICATION BY MASS SPECTROMETRY [LARGE SCALE ANALYSIS]</scope>
    <source>
        <tissue>Heart</tissue>
        <tissue>Lung</tissue>
        <tissue>Spleen</tissue>
    </source>
</reference>
<gene>
    <name type="primary">Heg1</name>
</gene>
<keyword id="KW-0025">Alternative splicing</keyword>
<keyword id="KW-0106">Calcium</keyword>
<keyword id="KW-0965">Cell junction</keyword>
<keyword id="KW-1003">Cell membrane</keyword>
<keyword id="KW-0217">Developmental protein</keyword>
<keyword id="KW-1015">Disulfide bond</keyword>
<keyword id="KW-0245">EGF-like domain</keyword>
<keyword id="KW-0325">Glycoprotein</keyword>
<keyword id="KW-0472">Membrane</keyword>
<keyword id="KW-0597">Phosphoprotein</keyword>
<keyword id="KW-1185">Reference proteome</keyword>
<keyword id="KW-0677">Repeat</keyword>
<keyword id="KW-0732">Signal</keyword>
<keyword id="KW-0812">Transmembrane</keyword>
<keyword id="KW-1133">Transmembrane helix</keyword>
<proteinExistence type="evidence at protein level"/>